<reference key="1">
    <citation type="journal article" date="2010" name="Proc. Natl. Acad. Sci. U.S.A.">
        <title>NudC-like protein 2 regulates the LIS1/dynein pathway by stabilizing LIS1 with Hsp90.</title>
        <authorList>
            <person name="Yang Y."/>
            <person name="Yan X."/>
            <person name="Cai Y."/>
            <person name="Lu Y."/>
            <person name="Si J."/>
            <person name="Zhou T."/>
        </authorList>
    </citation>
    <scope>NUCLEOTIDE SEQUENCE [MRNA]</scope>
    <scope>SUBCELLULAR LOCATION</scope>
    <scope>FUNCTION</scope>
    <scope>INTERACTION WITH LIS1</scope>
</reference>
<reference key="2">
    <citation type="journal article" date="2004" name="Nat. Genet.">
        <title>Complete sequencing and characterization of 21,243 full-length human cDNAs.</title>
        <authorList>
            <person name="Ota T."/>
            <person name="Suzuki Y."/>
            <person name="Nishikawa T."/>
            <person name="Otsuki T."/>
            <person name="Sugiyama T."/>
            <person name="Irie R."/>
            <person name="Wakamatsu A."/>
            <person name="Hayashi K."/>
            <person name="Sato H."/>
            <person name="Nagai K."/>
            <person name="Kimura K."/>
            <person name="Makita H."/>
            <person name="Sekine M."/>
            <person name="Obayashi M."/>
            <person name="Nishi T."/>
            <person name="Shibahara T."/>
            <person name="Tanaka T."/>
            <person name="Ishii S."/>
            <person name="Yamamoto J."/>
            <person name="Saito K."/>
            <person name="Kawai Y."/>
            <person name="Isono Y."/>
            <person name="Nakamura Y."/>
            <person name="Nagahari K."/>
            <person name="Murakami K."/>
            <person name="Yasuda T."/>
            <person name="Iwayanagi T."/>
            <person name="Wagatsuma M."/>
            <person name="Shiratori A."/>
            <person name="Sudo H."/>
            <person name="Hosoiri T."/>
            <person name="Kaku Y."/>
            <person name="Kodaira H."/>
            <person name="Kondo H."/>
            <person name="Sugawara M."/>
            <person name="Takahashi M."/>
            <person name="Kanda K."/>
            <person name="Yokoi T."/>
            <person name="Furuya T."/>
            <person name="Kikkawa E."/>
            <person name="Omura Y."/>
            <person name="Abe K."/>
            <person name="Kamihara K."/>
            <person name="Katsuta N."/>
            <person name="Sato K."/>
            <person name="Tanikawa M."/>
            <person name="Yamazaki M."/>
            <person name="Ninomiya K."/>
            <person name="Ishibashi T."/>
            <person name="Yamashita H."/>
            <person name="Murakawa K."/>
            <person name="Fujimori K."/>
            <person name="Tanai H."/>
            <person name="Kimata M."/>
            <person name="Watanabe M."/>
            <person name="Hiraoka S."/>
            <person name="Chiba Y."/>
            <person name="Ishida S."/>
            <person name="Ono Y."/>
            <person name="Takiguchi S."/>
            <person name="Watanabe S."/>
            <person name="Yosida M."/>
            <person name="Hotuta T."/>
            <person name="Kusano J."/>
            <person name="Kanehori K."/>
            <person name="Takahashi-Fujii A."/>
            <person name="Hara H."/>
            <person name="Tanase T.-O."/>
            <person name="Nomura Y."/>
            <person name="Togiya S."/>
            <person name="Komai F."/>
            <person name="Hara R."/>
            <person name="Takeuchi K."/>
            <person name="Arita M."/>
            <person name="Imose N."/>
            <person name="Musashino K."/>
            <person name="Yuuki H."/>
            <person name="Oshima A."/>
            <person name="Sasaki N."/>
            <person name="Aotsuka S."/>
            <person name="Yoshikawa Y."/>
            <person name="Matsunawa H."/>
            <person name="Ichihara T."/>
            <person name="Shiohata N."/>
            <person name="Sano S."/>
            <person name="Moriya S."/>
            <person name="Momiyama H."/>
            <person name="Satoh N."/>
            <person name="Takami S."/>
            <person name="Terashima Y."/>
            <person name="Suzuki O."/>
            <person name="Nakagawa S."/>
            <person name="Senoh A."/>
            <person name="Mizoguchi H."/>
            <person name="Goto Y."/>
            <person name="Shimizu F."/>
            <person name="Wakebe H."/>
            <person name="Hishigaki H."/>
            <person name="Watanabe T."/>
            <person name="Sugiyama A."/>
            <person name="Takemoto M."/>
            <person name="Kawakami B."/>
            <person name="Yamazaki M."/>
            <person name="Watanabe K."/>
            <person name="Kumagai A."/>
            <person name="Itakura S."/>
            <person name="Fukuzumi Y."/>
            <person name="Fujimori Y."/>
            <person name="Komiyama M."/>
            <person name="Tashiro H."/>
            <person name="Tanigami A."/>
            <person name="Fujiwara T."/>
            <person name="Ono T."/>
            <person name="Yamada K."/>
            <person name="Fujii Y."/>
            <person name="Ozaki K."/>
            <person name="Hirao M."/>
            <person name="Ohmori Y."/>
            <person name="Kawabata A."/>
            <person name="Hikiji T."/>
            <person name="Kobatake N."/>
            <person name="Inagaki H."/>
            <person name="Ikema Y."/>
            <person name="Okamoto S."/>
            <person name="Okitani R."/>
            <person name="Kawakami T."/>
            <person name="Noguchi S."/>
            <person name="Itoh T."/>
            <person name="Shigeta K."/>
            <person name="Senba T."/>
            <person name="Matsumura K."/>
            <person name="Nakajima Y."/>
            <person name="Mizuno T."/>
            <person name="Morinaga M."/>
            <person name="Sasaki M."/>
            <person name="Togashi T."/>
            <person name="Oyama M."/>
            <person name="Hata H."/>
            <person name="Watanabe M."/>
            <person name="Komatsu T."/>
            <person name="Mizushima-Sugano J."/>
            <person name="Satoh T."/>
            <person name="Shirai Y."/>
            <person name="Takahashi Y."/>
            <person name="Nakagawa K."/>
            <person name="Okumura K."/>
            <person name="Nagase T."/>
            <person name="Nomura N."/>
            <person name="Kikuchi H."/>
            <person name="Masuho Y."/>
            <person name="Yamashita R."/>
            <person name="Nakai K."/>
            <person name="Yada T."/>
            <person name="Nakamura Y."/>
            <person name="Ohara O."/>
            <person name="Isogai T."/>
            <person name="Sugano S."/>
        </authorList>
    </citation>
    <scope>NUCLEOTIDE SEQUENCE [LARGE SCALE MRNA]</scope>
    <source>
        <tissue>Trachea</tissue>
    </source>
</reference>
<reference key="3">
    <citation type="journal article" date="2007" name="BMC Genomics">
        <title>The full-ORF clone resource of the German cDNA consortium.</title>
        <authorList>
            <person name="Bechtel S."/>
            <person name="Rosenfelder H."/>
            <person name="Duda A."/>
            <person name="Schmidt C.P."/>
            <person name="Ernst U."/>
            <person name="Wellenreuther R."/>
            <person name="Mehrle A."/>
            <person name="Schuster C."/>
            <person name="Bahr A."/>
            <person name="Bloecker H."/>
            <person name="Heubner D."/>
            <person name="Hoerlein A."/>
            <person name="Michel G."/>
            <person name="Wedler H."/>
            <person name="Koehrer K."/>
            <person name="Ottenwaelder B."/>
            <person name="Poustka A."/>
            <person name="Wiemann S."/>
            <person name="Schupp I."/>
        </authorList>
    </citation>
    <scope>NUCLEOTIDE SEQUENCE [LARGE SCALE MRNA]</scope>
    <source>
        <tissue>Kidney</tissue>
    </source>
</reference>
<reference key="4">
    <citation type="submission" date="2005-09" db="EMBL/GenBank/DDBJ databases">
        <authorList>
            <person name="Mural R.J."/>
            <person name="Istrail S."/>
            <person name="Sutton G."/>
            <person name="Florea L."/>
            <person name="Halpern A.L."/>
            <person name="Mobarry C.M."/>
            <person name="Lippert R."/>
            <person name="Walenz B."/>
            <person name="Shatkay H."/>
            <person name="Dew I."/>
            <person name="Miller J.R."/>
            <person name="Flanigan M.J."/>
            <person name="Edwards N.J."/>
            <person name="Bolanos R."/>
            <person name="Fasulo D."/>
            <person name="Halldorsson B.V."/>
            <person name="Hannenhalli S."/>
            <person name="Turner R."/>
            <person name="Yooseph S."/>
            <person name="Lu F."/>
            <person name="Nusskern D.R."/>
            <person name="Shue B.C."/>
            <person name="Zheng X.H."/>
            <person name="Zhong F."/>
            <person name="Delcher A.L."/>
            <person name="Huson D.H."/>
            <person name="Kravitz S.A."/>
            <person name="Mouchard L."/>
            <person name="Reinert K."/>
            <person name="Remington K.A."/>
            <person name="Clark A.G."/>
            <person name="Waterman M.S."/>
            <person name="Eichler E.E."/>
            <person name="Adams M.D."/>
            <person name="Hunkapiller M.W."/>
            <person name="Myers E.W."/>
            <person name="Venter J.C."/>
        </authorList>
    </citation>
    <scope>NUCLEOTIDE SEQUENCE [LARGE SCALE GENOMIC DNA]</scope>
</reference>
<reference key="5">
    <citation type="journal article" date="2004" name="Genome Res.">
        <title>The status, quality, and expansion of the NIH full-length cDNA project: the Mammalian Gene Collection (MGC).</title>
        <authorList>
            <consortium name="The MGC Project Team"/>
        </authorList>
    </citation>
    <scope>NUCLEOTIDE SEQUENCE [LARGE SCALE MRNA]</scope>
    <source>
        <tissue>Testis</tissue>
    </source>
</reference>
<reference key="6">
    <citation type="journal article" date="2011" name="BMC Syst. Biol.">
        <title>Initial characterization of the human central proteome.</title>
        <authorList>
            <person name="Burkard T.R."/>
            <person name="Planyavsky M."/>
            <person name="Kaupe I."/>
            <person name="Breitwieser F.P."/>
            <person name="Buerckstuemmer T."/>
            <person name="Bennett K.L."/>
            <person name="Superti-Furga G."/>
            <person name="Colinge J."/>
        </authorList>
    </citation>
    <scope>IDENTIFICATION BY MASS SPECTROMETRY [LARGE SCALE ANALYSIS]</scope>
</reference>
<reference key="7">
    <citation type="journal article" date="2012" name="Proc. Natl. Acad. Sci. U.S.A.">
        <title>N-terminal acetylome analyses and functional insights of the N-terminal acetyltransferase NatB.</title>
        <authorList>
            <person name="Van Damme P."/>
            <person name="Lasa M."/>
            <person name="Polevoda B."/>
            <person name="Gazquez C."/>
            <person name="Elosegui-Artola A."/>
            <person name="Kim D.S."/>
            <person name="De Juan-Pardo E."/>
            <person name="Demeyer K."/>
            <person name="Hole K."/>
            <person name="Larrea E."/>
            <person name="Timmerman E."/>
            <person name="Prieto J."/>
            <person name="Arnesen T."/>
            <person name="Sherman F."/>
            <person name="Gevaert K."/>
            <person name="Aldabe R."/>
        </authorList>
    </citation>
    <scope>ACETYLATION [LARGE SCALE ANALYSIS] AT SER-2</scope>
    <scope>CLEAVAGE OF INITIATOR METHIONINE [LARGE SCALE ANALYSIS]</scope>
    <scope>IDENTIFICATION BY MASS SPECTROMETRY [LARGE SCALE ANALYSIS]</scope>
</reference>
<reference key="8">
    <citation type="journal article" date="2013" name="J. Proteome Res.">
        <title>Toward a comprehensive characterization of a human cancer cell phosphoproteome.</title>
        <authorList>
            <person name="Zhou H."/>
            <person name="Di Palma S."/>
            <person name="Preisinger C."/>
            <person name="Peng M."/>
            <person name="Polat A.N."/>
            <person name="Heck A.J."/>
            <person name="Mohammed S."/>
        </authorList>
    </citation>
    <scope>PHOSPHORYLATION [LARGE SCALE ANALYSIS] AT SER-142</scope>
    <scope>IDENTIFICATION BY MASS SPECTROMETRY [LARGE SCALE ANALYSIS]</scope>
    <source>
        <tissue>Erythroleukemia</tissue>
    </source>
</reference>
<reference key="9">
    <citation type="journal article" date="2014" name="J. Proteomics">
        <title>An enzyme assisted RP-RPLC approach for in-depth analysis of human liver phosphoproteome.</title>
        <authorList>
            <person name="Bian Y."/>
            <person name="Song C."/>
            <person name="Cheng K."/>
            <person name="Dong M."/>
            <person name="Wang F."/>
            <person name="Huang J."/>
            <person name="Sun D."/>
            <person name="Wang L."/>
            <person name="Ye M."/>
            <person name="Zou H."/>
        </authorList>
    </citation>
    <scope>IDENTIFICATION BY MASS SPECTROMETRY [LARGE SCALE ANALYSIS]</scope>
    <source>
        <tissue>Liver</tissue>
    </source>
</reference>
<gene>
    <name type="primary">NUDCD2</name>
</gene>
<protein>
    <recommendedName>
        <fullName>NudC domain-containing protein 2</fullName>
    </recommendedName>
</protein>
<proteinExistence type="evidence at protein level"/>
<comment type="function">
    <text evidence="4">May regulate the LIS1/dynein pathway by stabilizing LIS1 with Hsp90 chaperone.</text>
</comment>
<comment type="subunit">
    <text evidence="4">Interacts with LIS1.</text>
</comment>
<comment type="interaction">
    <interactant intactId="EBI-1052153">
        <id>Q8WVJ2</id>
    </interactant>
    <interactant intactId="EBI-2462220">
        <id>O15523</id>
        <label>DDX3Y</label>
    </interactant>
    <organismsDiffer>false</organismsDiffer>
    <experiments>2</experiments>
</comment>
<comment type="interaction">
    <interactant intactId="EBI-1052153">
        <id>Q8WVJ2</id>
    </interactant>
    <interactant intactId="EBI-6425658">
        <id>O75426</id>
        <label>FBXO24</label>
    </interactant>
    <organismsDiffer>false</organismsDiffer>
    <experiments>3</experiments>
</comment>
<comment type="interaction">
    <interactant intactId="EBI-1052153">
        <id>Q8WVJ2</id>
    </interactant>
    <interactant intactId="EBI-296047">
        <id>P07900</id>
        <label>HSP90AA1</label>
    </interactant>
    <organismsDiffer>false</organismsDiffer>
    <experiments>4</experiments>
</comment>
<comment type="interaction">
    <interactant intactId="EBI-1052153">
        <id>Q8WVJ2</id>
    </interactant>
    <interactant intactId="EBI-1752987">
        <id>Q86SG6</id>
        <label>NEK8</label>
    </interactant>
    <organismsDiffer>false</organismsDiffer>
    <experiments>3</experiments>
</comment>
<comment type="interaction">
    <interactant intactId="EBI-1052153">
        <id>Q8WVJ2</id>
    </interactant>
    <interactant intactId="EBI-748974">
        <id>Q96CV9</id>
        <label>OPTN</label>
    </interactant>
    <organismsDiffer>false</organismsDiffer>
    <experiments>3</experiments>
</comment>
<comment type="interaction">
    <interactant intactId="EBI-1052153">
        <id>Q8WVJ2</id>
    </interactant>
    <interactant intactId="EBI-720620">
        <id>P43034</id>
        <label>PAFAH1B1</label>
    </interactant>
    <organismsDiffer>false</organismsDiffer>
    <experiments>8</experiments>
</comment>
<comment type="interaction">
    <interactant intactId="EBI-1052153">
        <id>Q8WVJ2</id>
    </interactant>
    <interactant intactId="EBI-351098">
        <id>O14744</id>
        <label>PRMT5</label>
    </interactant>
    <organismsDiffer>false</organismsDiffer>
    <experiments>2</experiments>
</comment>
<comment type="interaction">
    <interactant intactId="EBI-1052153">
        <id>Q8WVJ2</id>
    </interactant>
    <interactant intactId="EBI-742404">
        <id>O95199</id>
        <label>RCBTB2</label>
    </interactant>
    <organismsDiffer>false</organismsDiffer>
    <experiments>2</experiments>
</comment>
<comment type="subcellular location">
    <subcellularLocation>
        <location evidence="4">Chromosome</location>
        <location evidence="4">Centromere</location>
        <location evidence="4">Kinetochore</location>
    </subcellularLocation>
    <subcellularLocation>
        <location evidence="4">Cytoplasm</location>
        <location evidence="4">Cytoskeleton</location>
        <location evidence="4">Microtubule organizing center</location>
        <location evidence="4">Centrosome</location>
    </subcellularLocation>
    <subcellularLocation>
        <location evidence="4">Cytoplasm</location>
        <location evidence="4">Cytoskeleton</location>
        <location evidence="4">Spindle pole</location>
    </subcellularLocation>
    <text>Associates with centrosomes in interphase and to spindle poles and kinetochores during mitosis.</text>
</comment>
<feature type="initiator methionine" description="Removed" evidence="5">
    <location>
        <position position="1"/>
    </location>
</feature>
<feature type="chain" id="PRO_0000057982" description="NudC domain-containing protein 2">
    <location>
        <begin position="2"/>
        <end position="157"/>
    </location>
</feature>
<feature type="domain" description="CS" evidence="2">
    <location>
        <begin position="14"/>
        <end position="104"/>
    </location>
</feature>
<feature type="region of interest" description="Disordered" evidence="3">
    <location>
        <begin position="134"/>
        <end position="157"/>
    </location>
</feature>
<feature type="modified residue" description="N-acetylserine" evidence="5">
    <location>
        <position position="2"/>
    </location>
</feature>
<feature type="modified residue" description="Phosphoserine" evidence="6">
    <location>
        <position position="142"/>
    </location>
</feature>
<feature type="modified residue" description="Phosphotyrosine" evidence="1">
    <location>
        <position position="145"/>
    </location>
</feature>
<evidence type="ECO:0000250" key="1">
    <source>
        <dbReference type="UniProtKB" id="Q9CQ48"/>
    </source>
</evidence>
<evidence type="ECO:0000255" key="2">
    <source>
        <dbReference type="PROSITE-ProRule" id="PRU00547"/>
    </source>
</evidence>
<evidence type="ECO:0000256" key="3">
    <source>
        <dbReference type="SAM" id="MobiDB-lite"/>
    </source>
</evidence>
<evidence type="ECO:0000269" key="4">
    <source>
    </source>
</evidence>
<evidence type="ECO:0007744" key="5">
    <source>
    </source>
</evidence>
<evidence type="ECO:0007744" key="6">
    <source>
    </source>
</evidence>
<dbReference type="EMBL" id="FJ215684">
    <property type="protein sequence ID" value="ACJ05660.1"/>
    <property type="molecule type" value="mRNA"/>
</dbReference>
<dbReference type="EMBL" id="AK311957">
    <property type="protein sequence ID" value="BAG34897.1"/>
    <property type="molecule type" value="mRNA"/>
</dbReference>
<dbReference type="EMBL" id="BX538290">
    <property type="protein sequence ID" value="CAD98085.1"/>
    <property type="molecule type" value="mRNA"/>
</dbReference>
<dbReference type="EMBL" id="CH471062">
    <property type="protein sequence ID" value="EAW61527.1"/>
    <property type="molecule type" value="Genomic_DNA"/>
</dbReference>
<dbReference type="EMBL" id="BC017934">
    <property type="protein sequence ID" value="AAH17934.1"/>
    <property type="molecule type" value="mRNA"/>
</dbReference>
<dbReference type="CCDS" id="CCDS4361.1"/>
<dbReference type="RefSeq" id="NP_660309.1">
    <property type="nucleotide sequence ID" value="NM_145266.6"/>
</dbReference>
<dbReference type="SMR" id="Q8WVJ2"/>
<dbReference type="BioGRID" id="126402">
    <property type="interactions" value="423"/>
</dbReference>
<dbReference type="DIP" id="DIP-59509N"/>
<dbReference type="FunCoup" id="Q8WVJ2">
    <property type="interactions" value="1890"/>
</dbReference>
<dbReference type="IntAct" id="Q8WVJ2">
    <property type="interactions" value="59"/>
</dbReference>
<dbReference type="MINT" id="Q8WVJ2"/>
<dbReference type="STRING" id="9606.ENSP00000304854"/>
<dbReference type="GlyConnect" id="1583">
    <property type="glycosylation" value="1 N-Linked glycan (1 site)"/>
</dbReference>
<dbReference type="GlyGen" id="Q8WVJ2">
    <property type="glycosylation" value="3 sites, 3 N-linked glycans (1 site), 1 O-linked glycan (2 sites)"/>
</dbReference>
<dbReference type="iPTMnet" id="Q8WVJ2"/>
<dbReference type="PhosphoSitePlus" id="Q8WVJ2"/>
<dbReference type="BioMuta" id="NUDCD2"/>
<dbReference type="jPOST" id="Q8WVJ2"/>
<dbReference type="MassIVE" id="Q8WVJ2"/>
<dbReference type="PaxDb" id="9606-ENSP00000304854"/>
<dbReference type="PeptideAtlas" id="Q8WVJ2"/>
<dbReference type="ProteomicsDB" id="74798"/>
<dbReference type="Pumba" id="Q8WVJ2"/>
<dbReference type="TopDownProteomics" id="Q8WVJ2"/>
<dbReference type="Antibodypedia" id="45873">
    <property type="antibodies" value="78 antibodies from 20 providers"/>
</dbReference>
<dbReference type="DNASU" id="134492"/>
<dbReference type="Ensembl" id="ENST00000302764.9">
    <property type="protein sequence ID" value="ENSP00000304854.3"/>
    <property type="gene ID" value="ENSG00000170584.12"/>
</dbReference>
<dbReference type="GeneID" id="134492"/>
<dbReference type="KEGG" id="hsa:134492"/>
<dbReference type="MANE-Select" id="ENST00000302764.9">
    <property type="protein sequence ID" value="ENSP00000304854.3"/>
    <property type="RefSeq nucleotide sequence ID" value="NM_145266.6"/>
    <property type="RefSeq protein sequence ID" value="NP_660309.1"/>
</dbReference>
<dbReference type="UCSC" id="uc003lze.4">
    <property type="organism name" value="human"/>
</dbReference>
<dbReference type="AGR" id="HGNC:30535"/>
<dbReference type="CTD" id="134492"/>
<dbReference type="DisGeNET" id="134492"/>
<dbReference type="GeneCards" id="NUDCD2"/>
<dbReference type="HGNC" id="HGNC:30535">
    <property type="gene designation" value="NUDCD2"/>
</dbReference>
<dbReference type="HPA" id="ENSG00000170584">
    <property type="expression patterns" value="Low tissue specificity"/>
</dbReference>
<dbReference type="MIM" id="620136">
    <property type="type" value="gene"/>
</dbReference>
<dbReference type="neXtProt" id="NX_Q8WVJ2"/>
<dbReference type="OpenTargets" id="ENSG00000170584"/>
<dbReference type="PharmGKB" id="PA134991349"/>
<dbReference type="VEuPathDB" id="HostDB:ENSG00000170584"/>
<dbReference type="eggNOG" id="KOG2265">
    <property type="taxonomic scope" value="Eukaryota"/>
</dbReference>
<dbReference type="GeneTree" id="ENSGT00390000001644"/>
<dbReference type="InParanoid" id="Q8WVJ2"/>
<dbReference type="OMA" id="RDVECSL"/>
<dbReference type="OrthoDB" id="515366at2759"/>
<dbReference type="PAN-GO" id="Q8WVJ2">
    <property type="GO annotations" value="3 GO annotations based on evolutionary models"/>
</dbReference>
<dbReference type="PhylomeDB" id="Q8WVJ2"/>
<dbReference type="TreeFam" id="TF332391"/>
<dbReference type="PathwayCommons" id="Q8WVJ2"/>
<dbReference type="SignaLink" id="Q8WVJ2"/>
<dbReference type="SIGNOR" id="Q8WVJ2"/>
<dbReference type="BioGRID-ORCS" id="134492">
    <property type="hits" value="42 hits in 1165 CRISPR screens"/>
</dbReference>
<dbReference type="CD-CODE" id="FB4E32DD">
    <property type="entry name" value="Presynaptic clusters and postsynaptic densities"/>
</dbReference>
<dbReference type="ChiTaRS" id="NUDCD2">
    <property type="organism name" value="human"/>
</dbReference>
<dbReference type="GeneWiki" id="NUDCD2"/>
<dbReference type="GenomeRNAi" id="134492"/>
<dbReference type="Pharos" id="Q8WVJ2">
    <property type="development level" value="Tdark"/>
</dbReference>
<dbReference type="PRO" id="PR:Q8WVJ2"/>
<dbReference type="Proteomes" id="UP000005640">
    <property type="component" value="Chromosome 5"/>
</dbReference>
<dbReference type="RNAct" id="Q8WVJ2">
    <property type="molecule type" value="protein"/>
</dbReference>
<dbReference type="Bgee" id="ENSG00000170584">
    <property type="expression patterns" value="Expressed in oocyte and 188 other cell types or tissues"/>
</dbReference>
<dbReference type="ExpressionAtlas" id="Q8WVJ2">
    <property type="expression patterns" value="baseline and differential"/>
</dbReference>
<dbReference type="GO" id="GO:0005813">
    <property type="term" value="C:centrosome"/>
    <property type="evidence" value="ECO:0007669"/>
    <property type="project" value="UniProtKB-SubCell"/>
</dbReference>
<dbReference type="GO" id="GO:0005737">
    <property type="term" value="C:cytoplasm"/>
    <property type="evidence" value="ECO:0000318"/>
    <property type="project" value="GO_Central"/>
</dbReference>
<dbReference type="GO" id="GO:0005829">
    <property type="term" value="C:cytosol"/>
    <property type="evidence" value="ECO:0000314"/>
    <property type="project" value="HPA"/>
</dbReference>
<dbReference type="GO" id="GO:0045171">
    <property type="term" value="C:intercellular bridge"/>
    <property type="evidence" value="ECO:0000314"/>
    <property type="project" value="HPA"/>
</dbReference>
<dbReference type="GO" id="GO:0000776">
    <property type="term" value="C:kinetochore"/>
    <property type="evidence" value="ECO:0007669"/>
    <property type="project" value="UniProtKB-KW"/>
</dbReference>
<dbReference type="GO" id="GO:0015630">
    <property type="term" value="C:microtubule cytoskeleton"/>
    <property type="evidence" value="ECO:0000314"/>
    <property type="project" value="HPA"/>
</dbReference>
<dbReference type="GO" id="GO:0072686">
    <property type="term" value="C:mitotic spindle"/>
    <property type="evidence" value="ECO:0000314"/>
    <property type="project" value="HPA"/>
</dbReference>
<dbReference type="GO" id="GO:0000922">
    <property type="term" value="C:spindle pole"/>
    <property type="evidence" value="ECO:0007669"/>
    <property type="project" value="UniProtKB-SubCell"/>
</dbReference>
<dbReference type="GO" id="GO:0051082">
    <property type="term" value="F:unfolded protein binding"/>
    <property type="evidence" value="ECO:0000318"/>
    <property type="project" value="GO_Central"/>
</dbReference>
<dbReference type="GO" id="GO:0006457">
    <property type="term" value="P:protein folding"/>
    <property type="evidence" value="ECO:0000318"/>
    <property type="project" value="GO_Central"/>
</dbReference>
<dbReference type="CDD" id="cd06494">
    <property type="entry name" value="p23_NUDCD2_like"/>
    <property type="match status" value="1"/>
</dbReference>
<dbReference type="FunFam" id="1.20.5.740:FF:000001">
    <property type="entry name" value="nudC domain-containing protein 2"/>
    <property type="match status" value="1"/>
</dbReference>
<dbReference type="FunFam" id="2.60.40.790:FF:000021">
    <property type="entry name" value="nudC domain-containing protein 2"/>
    <property type="match status" value="1"/>
</dbReference>
<dbReference type="Gene3D" id="2.60.40.790">
    <property type="match status" value="1"/>
</dbReference>
<dbReference type="Gene3D" id="1.20.5.740">
    <property type="entry name" value="Single helix bin"/>
    <property type="match status" value="1"/>
</dbReference>
<dbReference type="InterPro" id="IPR007052">
    <property type="entry name" value="CS_dom"/>
</dbReference>
<dbReference type="InterPro" id="IPR008978">
    <property type="entry name" value="HSP20-like_chaperone"/>
</dbReference>
<dbReference type="InterPro" id="IPR037898">
    <property type="entry name" value="NudC_fam"/>
</dbReference>
<dbReference type="InterPro" id="IPR037902">
    <property type="entry name" value="p23_NUDCD2"/>
</dbReference>
<dbReference type="PANTHER" id="PTHR12356">
    <property type="entry name" value="NUCLEAR MOVEMENT PROTEIN NUDC"/>
    <property type="match status" value="1"/>
</dbReference>
<dbReference type="PANTHER" id="PTHR12356:SF18">
    <property type="entry name" value="NUDC DOMAIN-CONTAINING PROTEIN 2"/>
    <property type="match status" value="1"/>
</dbReference>
<dbReference type="Pfam" id="PF04969">
    <property type="entry name" value="CS"/>
    <property type="match status" value="1"/>
</dbReference>
<dbReference type="SUPFAM" id="SSF49764">
    <property type="entry name" value="HSP20-like chaperones"/>
    <property type="match status" value="1"/>
</dbReference>
<dbReference type="PROSITE" id="PS51203">
    <property type="entry name" value="CS"/>
    <property type="match status" value="1"/>
</dbReference>
<organism>
    <name type="scientific">Homo sapiens</name>
    <name type="common">Human</name>
    <dbReference type="NCBI Taxonomy" id="9606"/>
    <lineage>
        <taxon>Eukaryota</taxon>
        <taxon>Metazoa</taxon>
        <taxon>Chordata</taxon>
        <taxon>Craniata</taxon>
        <taxon>Vertebrata</taxon>
        <taxon>Euteleostomi</taxon>
        <taxon>Mammalia</taxon>
        <taxon>Eutheria</taxon>
        <taxon>Euarchontoglires</taxon>
        <taxon>Primates</taxon>
        <taxon>Haplorrhini</taxon>
        <taxon>Catarrhini</taxon>
        <taxon>Hominidae</taxon>
        <taxon>Homo</taxon>
    </lineage>
</organism>
<sequence>MSAPFEERSGVVPCGTPWGQWYQTLEEVFIEVQVPPGTRAQDIQCGLQSRHVALSVGGREILKGKLFDSTIADEGTWTLEDRKMVRIVLTKTKRDAANCWTSLLESEYAADPWVQDQMQRKLTLERFQKENPGFDFSGAEISGNYTKGGPDFSNLEK</sequence>
<accession>Q8WVJ2</accession>
<accession>B2R4V0</accession>
<keyword id="KW-0007">Acetylation</keyword>
<keyword id="KW-0137">Centromere</keyword>
<keyword id="KW-0158">Chromosome</keyword>
<keyword id="KW-0963">Cytoplasm</keyword>
<keyword id="KW-0206">Cytoskeleton</keyword>
<keyword id="KW-0995">Kinetochore</keyword>
<keyword id="KW-0597">Phosphoprotein</keyword>
<keyword id="KW-1267">Proteomics identification</keyword>
<keyword id="KW-1185">Reference proteome</keyword>
<name>NUDC2_HUMAN</name>